<keyword id="KW-1003">Cell membrane</keyword>
<keyword id="KW-0204">Cytolysis</keyword>
<keyword id="KW-0472">Membrane</keyword>
<keyword id="KW-1185">Reference proteome</keyword>
<keyword id="KW-0812">Transmembrane</keyword>
<keyword id="KW-1133">Transmembrane helix</keyword>
<feature type="chain" id="PRO_0000217064" description="Antiholin-like protein LrgB">
    <location>
        <begin position="1"/>
        <end position="233"/>
    </location>
</feature>
<feature type="transmembrane region" description="Helical" evidence="1">
    <location>
        <begin position="5"/>
        <end position="25"/>
    </location>
</feature>
<feature type="transmembrane region" description="Helical" evidence="1">
    <location>
        <begin position="33"/>
        <end position="53"/>
    </location>
</feature>
<feature type="transmembrane region" description="Helical" evidence="1">
    <location>
        <begin position="63"/>
        <end position="83"/>
    </location>
</feature>
<feature type="transmembrane region" description="Helical" evidence="1">
    <location>
        <begin position="97"/>
        <end position="117"/>
    </location>
</feature>
<feature type="transmembrane region" description="Helical" evidence="1">
    <location>
        <begin position="152"/>
        <end position="172"/>
    </location>
</feature>
<feature type="transmembrane region" description="Helical" evidence="1">
    <location>
        <begin position="212"/>
        <end position="232"/>
    </location>
</feature>
<comment type="function">
    <text evidence="1">Inhibits the expression or activity of extracellular murein hydrolases by interacting, possibly with LrgA, with the holin-like proteins CidA and/or CidB. The LrgAB and CidAB proteins may affect the proton motive force of the membrane. May be involved in programmed cell death (PCD), possibly triggering PCD in response to antibiotics and environmental stresses.</text>
</comment>
<comment type="subcellular location">
    <subcellularLocation>
        <location evidence="1">Cell membrane</location>
        <topology evidence="1">Multi-pass membrane protein</topology>
    </subcellularLocation>
</comment>
<comment type="similarity">
    <text evidence="1">Belongs to the CidB/LrgB family. LrgB subfamily.</text>
</comment>
<sequence>MIEHLGINTPYFGILVSLIPFVIATYFYKKTNGFFLLAPLFVSMVAGIAFLKLTGISYENYKIGGDIINFFLEPATICFAIPLYRKREVLKKYWLQIFGGIAVGTIIALLLIYLVAITFQFGNQIIASMLPQAATTAIALPVSDGIGGVKELTSLAVILNAVVISALGAKIVKLFKISNPIARGLALGTSGHTLGVAAAKELGETEESMGSIAVVIVGVIVVAVVPILAPILL</sequence>
<organism>
    <name type="scientific">Staphylococcus epidermidis (strain ATCC 35984 / DSM 28319 / BCRC 17069 / CCUG 31568 / BM 3577 / RP62A)</name>
    <dbReference type="NCBI Taxonomy" id="176279"/>
    <lineage>
        <taxon>Bacteria</taxon>
        <taxon>Bacillati</taxon>
        <taxon>Bacillota</taxon>
        <taxon>Bacilli</taxon>
        <taxon>Bacillales</taxon>
        <taxon>Staphylococcaceae</taxon>
        <taxon>Staphylococcus</taxon>
    </lineage>
</organism>
<name>LRGB_STAEQ</name>
<evidence type="ECO:0000255" key="1">
    <source>
        <dbReference type="HAMAP-Rule" id="MF_01142"/>
    </source>
</evidence>
<protein>
    <recommendedName>
        <fullName evidence="1">Antiholin-like protein LrgB</fullName>
    </recommendedName>
</protein>
<accession>Q5HLG0</accession>
<reference key="1">
    <citation type="journal article" date="2005" name="J. Bacteriol.">
        <title>Insights on evolution of virulence and resistance from the complete genome analysis of an early methicillin-resistant Staphylococcus aureus strain and a biofilm-producing methicillin-resistant Staphylococcus epidermidis strain.</title>
        <authorList>
            <person name="Gill S.R."/>
            <person name="Fouts D.E."/>
            <person name="Archer G.L."/>
            <person name="Mongodin E.F."/>
            <person name="DeBoy R.T."/>
            <person name="Ravel J."/>
            <person name="Paulsen I.T."/>
            <person name="Kolonay J.F."/>
            <person name="Brinkac L.M."/>
            <person name="Beanan M.J."/>
            <person name="Dodson R.J."/>
            <person name="Daugherty S.C."/>
            <person name="Madupu R."/>
            <person name="Angiuoli S.V."/>
            <person name="Durkin A.S."/>
            <person name="Haft D.H."/>
            <person name="Vamathevan J.J."/>
            <person name="Khouri H."/>
            <person name="Utterback T.R."/>
            <person name="Lee C."/>
            <person name="Dimitrov G."/>
            <person name="Jiang L."/>
            <person name="Qin H."/>
            <person name="Weidman J."/>
            <person name="Tran K."/>
            <person name="Kang K.H."/>
            <person name="Hance I.R."/>
            <person name="Nelson K.E."/>
            <person name="Fraser C.M."/>
        </authorList>
    </citation>
    <scope>NUCLEOTIDE SEQUENCE [LARGE SCALE GENOMIC DNA]</scope>
    <source>
        <strain>ATCC 35984 / DSM 28319 / BCRC 17069 / CCUG 31568 / BM 3577 / RP62A</strain>
    </source>
</reference>
<gene>
    <name evidence="1" type="primary">lrgB</name>
    <name type="ordered locus">SERP2027</name>
</gene>
<proteinExistence type="inferred from homology"/>
<dbReference type="EMBL" id="CP000029">
    <property type="protein sequence ID" value="AAW52845.1"/>
    <property type="molecule type" value="Genomic_DNA"/>
</dbReference>
<dbReference type="RefSeq" id="WP_002438249.1">
    <property type="nucleotide sequence ID" value="NC_002976.3"/>
</dbReference>
<dbReference type="STRING" id="176279.SERP2027"/>
<dbReference type="GeneID" id="50017897"/>
<dbReference type="KEGG" id="ser:SERP2027"/>
<dbReference type="eggNOG" id="COG1346">
    <property type="taxonomic scope" value="Bacteria"/>
</dbReference>
<dbReference type="HOGENOM" id="CLU_082099_1_0_9"/>
<dbReference type="Proteomes" id="UP000000531">
    <property type="component" value="Chromosome"/>
</dbReference>
<dbReference type="GO" id="GO:0005886">
    <property type="term" value="C:plasma membrane"/>
    <property type="evidence" value="ECO:0007669"/>
    <property type="project" value="UniProtKB-SubCell"/>
</dbReference>
<dbReference type="GO" id="GO:0019835">
    <property type="term" value="P:cytolysis"/>
    <property type="evidence" value="ECO:0007669"/>
    <property type="project" value="UniProtKB-UniRule"/>
</dbReference>
<dbReference type="GO" id="GO:0031640">
    <property type="term" value="P:killing of cells of another organism"/>
    <property type="evidence" value="ECO:0007669"/>
    <property type="project" value="UniProtKB-KW"/>
</dbReference>
<dbReference type="GO" id="GO:0012501">
    <property type="term" value="P:programmed cell death"/>
    <property type="evidence" value="ECO:0007669"/>
    <property type="project" value="UniProtKB-UniRule"/>
</dbReference>
<dbReference type="HAMAP" id="MF_01142">
    <property type="entry name" value="LrgB"/>
    <property type="match status" value="1"/>
</dbReference>
<dbReference type="InterPro" id="IPR024891">
    <property type="entry name" value="Antiholin-like_LrgB"/>
</dbReference>
<dbReference type="InterPro" id="IPR007300">
    <property type="entry name" value="CidB/LrgB"/>
</dbReference>
<dbReference type="NCBIfam" id="NF003291">
    <property type="entry name" value="PRK04288.1"/>
    <property type="match status" value="1"/>
</dbReference>
<dbReference type="PANTHER" id="PTHR30249:SF0">
    <property type="entry name" value="PLASTIDAL GLYCOLATE_GLYCERATE TRANSLOCATOR 1, CHLOROPLASTIC"/>
    <property type="match status" value="1"/>
</dbReference>
<dbReference type="PANTHER" id="PTHR30249">
    <property type="entry name" value="PUTATIVE SEROTONIN TRANSPORTER"/>
    <property type="match status" value="1"/>
</dbReference>
<dbReference type="Pfam" id="PF04172">
    <property type="entry name" value="LrgB"/>
    <property type="match status" value="1"/>
</dbReference>